<proteinExistence type="inferred from homology"/>
<organism>
    <name type="scientific">Thermoplasma acidophilum (strain ATCC 25905 / DSM 1728 / JCM 9062 / NBRC 15155 / AMRC-C165)</name>
    <dbReference type="NCBI Taxonomy" id="273075"/>
    <lineage>
        <taxon>Archaea</taxon>
        <taxon>Methanobacteriati</taxon>
        <taxon>Thermoplasmatota</taxon>
        <taxon>Thermoplasmata</taxon>
        <taxon>Thermoplasmatales</taxon>
        <taxon>Thermoplasmataceae</taxon>
        <taxon>Thermoplasma</taxon>
    </lineage>
</organism>
<sequence length="632" mass="71910">MKIEERDGLARIAKFETPHGPIETPTVLPVINPNIMNITPQEMKPLGLQGIITNSYIILRTPELRERALREGLHSLIGYDGPIMTDSGTFQSYVYGSIEFNNREVVDFQRRIGSDISTILDVFTTPGTPKPEAEKAVIETYNRMLEVNDEEGIIAGPVQGGVYPDLRQKSAELMNSTNAGYHPIGGVVPLLETYDYSTLVDIIINSKINLSFNKPVHLFGGGHPMFFAFSVYLGVDLFDSASYIKYAKDDRLIYPDGTRDLARITELPQWSPLYDRYTVKEIRDLDKERRSLEIARHNLKAIFMEISEIKERIYEEGLAQYVAQKARSHPSLMKAYSRIMSYSNILEKYEDLSKKTAYFFYDSFSTRNPYVSRINRFTESYLSSNKKDTYAFTYRAWNPGYTNSEFVRDVYQKIDCNALISWSGTFVPAELENTYPIEQTVSSGFEPDPDFSRAKDLIAPFRVDMYKGEKFEGEQVRSFNLNKIRMVADYQFGSGVGRMIFRDDVRINVSKTGRIRGILSKEGRQIATMRNDGFFTLTYYGASLIHSQLKPPAMRVTVSKESAEYNAKGYSVFFKFILGSDENIIAKNDVLVVDEDDVLAAVGKAMVSGRELREYTEGIAVKVHEGRDQSEK</sequence>
<dbReference type="EC" id="2.4.2.48" evidence="1"/>
<dbReference type="EMBL" id="AL445067">
    <property type="protein sequence ID" value="CAC12611.1"/>
    <property type="molecule type" value="Genomic_DNA"/>
</dbReference>
<dbReference type="RefSeq" id="WP_010901893.1">
    <property type="nucleotide sequence ID" value="NC_002578.1"/>
</dbReference>
<dbReference type="SMR" id="Q9HI54"/>
<dbReference type="FunCoup" id="Q9HI54">
    <property type="interactions" value="130"/>
</dbReference>
<dbReference type="STRING" id="273075.gene:9572724"/>
<dbReference type="PaxDb" id="273075-Ta1493"/>
<dbReference type="EnsemblBacteria" id="CAC12611">
    <property type="protein sequence ID" value="CAC12611"/>
    <property type="gene ID" value="CAC12611"/>
</dbReference>
<dbReference type="KEGG" id="tac:Ta1493"/>
<dbReference type="eggNOG" id="arCOG00989">
    <property type="taxonomic scope" value="Archaea"/>
</dbReference>
<dbReference type="eggNOG" id="arCOG00991">
    <property type="taxonomic scope" value="Archaea"/>
</dbReference>
<dbReference type="HOGENOM" id="CLU_030083_0_0_2"/>
<dbReference type="InParanoid" id="Q9HI54"/>
<dbReference type="OrthoDB" id="6871at2157"/>
<dbReference type="BRENDA" id="2.4.2.48">
    <property type="organism ID" value="6324"/>
</dbReference>
<dbReference type="UniPathway" id="UPA00393"/>
<dbReference type="Proteomes" id="UP000001024">
    <property type="component" value="Chromosome"/>
</dbReference>
<dbReference type="GO" id="GO:0005737">
    <property type="term" value="C:cytoplasm"/>
    <property type="evidence" value="ECO:0007669"/>
    <property type="project" value="TreeGrafter"/>
</dbReference>
<dbReference type="GO" id="GO:0016763">
    <property type="term" value="F:pentosyltransferase activity"/>
    <property type="evidence" value="ECO:0007669"/>
    <property type="project" value="UniProtKB-UniRule"/>
</dbReference>
<dbReference type="GO" id="GO:0003723">
    <property type="term" value="F:RNA binding"/>
    <property type="evidence" value="ECO:0007669"/>
    <property type="project" value="InterPro"/>
</dbReference>
<dbReference type="GO" id="GO:0008270">
    <property type="term" value="F:zinc ion binding"/>
    <property type="evidence" value="ECO:0007669"/>
    <property type="project" value="UniProtKB-UniRule"/>
</dbReference>
<dbReference type="GO" id="GO:0002099">
    <property type="term" value="P:tRNA wobble guanine modification"/>
    <property type="evidence" value="ECO:0007669"/>
    <property type="project" value="TreeGrafter"/>
</dbReference>
<dbReference type="CDD" id="cd21149">
    <property type="entry name" value="PUA_archaeosine_TGT"/>
    <property type="match status" value="1"/>
</dbReference>
<dbReference type="Gene3D" id="3.10.450.90">
    <property type="entry name" value="ArcTGT, C2 domain"/>
    <property type="match status" value="1"/>
</dbReference>
<dbReference type="Gene3D" id="2.30.130.10">
    <property type="entry name" value="PUA domain"/>
    <property type="match status" value="1"/>
</dbReference>
<dbReference type="Gene3D" id="3.20.20.105">
    <property type="entry name" value="Queuine tRNA-ribosyltransferase-like"/>
    <property type="match status" value="1"/>
</dbReference>
<dbReference type="HAMAP" id="MF_01634">
    <property type="entry name" value="TgtA_arch"/>
    <property type="match status" value="1"/>
</dbReference>
<dbReference type="InterPro" id="IPR050076">
    <property type="entry name" value="ArchSynthase1/Queuine_TRR"/>
</dbReference>
<dbReference type="InterPro" id="IPR002478">
    <property type="entry name" value="PUA"/>
</dbReference>
<dbReference type="InterPro" id="IPR015947">
    <property type="entry name" value="PUA-like_sf"/>
</dbReference>
<dbReference type="InterPro" id="IPR036974">
    <property type="entry name" value="PUA_sf"/>
</dbReference>
<dbReference type="InterPro" id="IPR036511">
    <property type="entry name" value="TGT-like_sf"/>
</dbReference>
<dbReference type="InterPro" id="IPR029402">
    <property type="entry name" value="TGT_C2"/>
</dbReference>
<dbReference type="InterPro" id="IPR038250">
    <property type="entry name" value="TGT_C2_sf"/>
</dbReference>
<dbReference type="InterPro" id="IPR004804">
    <property type="entry name" value="TgtA"/>
</dbReference>
<dbReference type="InterPro" id="IPR002616">
    <property type="entry name" value="tRNA_ribo_trans-like"/>
</dbReference>
<dbReference type="InterPro" id="IPR004521">
    <property type="entry name" value="Uncharacterised_CHP00451"/>
</dbReference>
<dbReference type="NCBIfam" id="TIGR00432">
    <property type="entry name" value="arcsn_tRNA_tgt"/>
    <property type="match status" value="1"/>
</dbReference>
<dbReference type="NCBIfam" id="TIGR00449">
    <property type="entry name" value="tgt_general"/>
    <property type="match status" value="1"/>
</dbReference>
<dbReference type="NCBIfam" id="TIGR00451">
    <property type="entry name" value="unchar_dom_2"/>
    <property type="match status" value="1"/>
</dbReference>
<dbReference type="PANTHER" id="PTHR46499">
    <property type="entry name" value="QUEUINE TRNA-RIBOSYLTRANSFERASE"/>
    <property type="match status" value="1"/>
</dbReference>
<dbReference type="PANTHER" id="PTHR46499:SF1">
    <property type="entry name" value="QUEUINE TRNA-RIBOSYLTRANSFERASE"/>
    <property type="match status" value="1"/>
</dbReference>
<dbReference type="Pfam" id="PF01472">
    <property type="entry name" value="PUA"/>
    <property type="match status" value="1"/>
</dbReference>
<dbReference type="Pfam" id="PF01702">
    <property type="entry name" value="TGT"/>
    <property type="match status" value="1"/>
</dbReference>
<dbReference type="Pfam" id="PF14810">
    <property type="entry name" value="TGT_C2"/>
    <property type="match status" value="1"/>
</dbReference>
<dbReference type="SMART" id="SM00359">
    <property type="entry name" value="PUA"/>
    <property type="match status" value="1"/>
</dbReference>
<dbReference type="SUPFAM" id="SSF88802">
    <property type="entry name" value="Pre-PUA domain"/>
    <property type="match status" value="1"/>
</dbReference>
<dbReference type="SUPFAM" id="SSF88697">
    <property type="entry name" value="PUA domain-like"/>
    <property type="match status" value="1"/>
</dbReference>
<dbReference type="SUPFAM" id="SSF51713">
    <property type="entry name" value="tRNA-guanine transglycosylase"/>
    <property type="match status" value="1"/>
</dbReference>
<dbReference type="PROSITE" id="PS50890">
    <property type="entry name" value="PUA"/>
    <property type="match status" value="1"/>
</dbReference>
<evidence type="ECO:0000255" key="1">
    <source>
        <dbReference type="HAMAP-Rule" id="MF_01634"/>
    </source>
</evidence>
<gene>
    <name evidence="1" type="primary">tgtA</name>
    <name type="ordered locus">Ta1493</name>
</gene>
<reference key="1">
    <citation type="journal article" date="2000" name="Nature">
        <title>The genome sequence of the thermoacidophilic scavenger Thermoplasma acidophilum.</title>
        <authorList>
            <person name="Ruepp A."/>
            <person name="Graml W."/>
            <person name="Santos-Martinez M.-L."/>
            <person name="Koretke K.K."/>
            <person name="Volker C."/>
            <person name="Mewes H.-W."/>
            <person name="Frishman D."/>
            <person name="Stocker S."/>
            <person name="Lupas A.N."/>
            <person name="Baumeister W."/>
        </authorList>
    </citation>
    <scope>NUCLEOTIDE SEQUENCE [LARGE SCALE GENOMIC DNA]</scope>
    <source>
        <strain>ATCC 25905 / DSM 1728 / JCM 9062 / NBRC 15155 / AMRC-C165</strain>
    </source>
</reference>
<comment type="function">
    <text evidence="1">Exchanges the guanine residue with 7-cyano-7-deazaguanine (preQ0) at position 15 in the dihydrouridine loop (D-loop) of archaeal tRNAs.</text>
</comment>
<comment type="catalytic activity">
    <reaction evidence="1">
        <text>guanosine(15) in tRNA + 7-cyano-7-deazaguanine = 7-cyano-7-carbaguanosine(15) in tRNA + guanine</text>
        <dbReference type="Rhea" id="RHEA:43164"/>
        <dbReference type="Rhea" id="RHEA-COMP:10371"/>
        <dbReference type="Rhea" id="RHEA-COMP:10372"/>
        <dbReference type="ChEBI" id="CHEBI:16235"/>
        <dbReference type="ChEBI" id="CHEBI:45075"/>
        <dbReference type="ChEBI" id="CHEBI:74269"/>
        <dbReference type="ChEBI" id="CHEBI:82850"/>
        <dbReference type="EC" id="2.4.2.48"/>
    </reaction>
</comment>
<comment type="cofactor">
    <cofactor evidence="1">
        <name>Zn(2+)</name>
        <dbReference type="ChEBI" id="CHEBI:29105"/>
    </cofactor>
    <text evidence="1">Binds 1 zinc ion per subunit.</text>
</comment>
<comment type="pathway">
    <text evidence="1">tRNA modification; archaeosine-tRNA biosynthesis.</text>
</comment>
<comment type="similarity">
    <text evidence="1">Belongs to the archaeosine tRNA-ribosyltransferase family.</text>
</comment>
<keyword id="KW-0328">Glycosyltransferase</keyword>
<keyword id="KW-0479">Metal-binding</keyword>
<keyword id="KW-1185">Reference proteome</keyword>
<keyword id="KW-0808">Transferase</keyword>
<keyword id="KW-0819">tRNA processing</keyword>
<keyword id="KW-0862">Zinc</keyword>
<name>ATGT_THEAC</name>
<accession>Q9HI54</accession>
<feature type="chain" id="PRO_0000247887" description="tRNA-guanine(15) transglycosylase">
    <location>
        <begin position="1"/>
        <end position="632"/>
    </location>
</feature>
<feature type="domain" description="PUA" evidence="1">
    <location>
        <begin position="553"/>
        <end position="628"/>
    </location>
</feature>
<feature type="active site" description="Nucleophile" evidence="1">
    <location>
        <position position="86"/>
    </location>
</feature>
<feature type="binding site" evidence="1">
    <location>
        <position position="121"/>
    </location>
    <ligand>
        <name>substrate</name>
    </ligand>
</feature>
<feature type="binding site" evidence="1">
    <location>
        <position position="186"/>
    </location>
    <ligand>
        <name>substrate</name>
    </ligand>
</feature>
<protein>
    <recommendedName>
        <fullName evidence="1">tRNA-guanine(15) transglycosylase</fullName>
        <ecNumber evidence="1">2.4.2.48</ecNumber>
    </recommendedName>
    <alternativeName>
        <fullName evidence="1">7-cyano-7-deazaguanine tRNA-ribosyltransferase</fullName>
    </alternativeName>
    <alternativeName>
        <fullName evidence="1">Archaeal tRNA-guanine transglycosylase</fullName>
    </alternativeName>
</protein>